<feature type="chain" id="PRO_1000045143" description="Aspartate/glutamate leucyltransferase">
    <location>
        <begin position="1"/>
        <end position="235"/>
    </location>
</feature>
<dbReference type="EC" id="2.3.2.29" evidence="1"/>
<dbReference type="EMBL" id="CT573326">
    <property type="protein sequence ID" value="CAK15029.1"/>
    <property type="molecule type" value="Genomic_DNA"/>
</dbReference>
<dbReference type="RefSeq" id="WP_011533431.1">
    <property type="nucleotide sequence ID" value="NC_008027.1"/>
</dbReference>
<dbReference type="SMR" id="Q1IBD6"/>
<dbReference type="STRING" id="384676.PSEEN2209"/>
<dbReference type="GeneID" id="32805408"/>
<dbReference type="KEGG" id="pen:PSEEN2209"/>
<dbReference type="eggNOG" id="COG2935">
    <property type="taxonomic scope" value="Bacteria"/>
</dbReference>
<dbReference type="HOGENOM" id="CLU_077607_0_0_6"/>
<dbReference type="OrthoDB" id="9782022at2"/>
<dbReference type="Proteomes" id="UP000000658">
    <property type="component" value="Chromosome"/>
</dbReference>
<dbReference type="GO" id="GO:0005737">
    <property type="term" value="C:cytoplasm"/>
    <property type="evidence" value="ECO:0007669"/>
    <property type="project" value="UniProtKB-SubCell"/>
</dbReference>
<dbReference type="GO" id="GO:0004057">
    <property type="term" value="F:arginyl-tRNA--protein transferase activity"/>
    <property type="evidence" value="ECO:0007669"/>
    <property type="project" value="InterPro"/>
</dbReference>
<dbReference type="GO" id="GO:0008914">
    <property type="term" value="F:leucyl-tRNA--protein transferase activity"/>
    <property type="evidence" value="ECO:0007669"/>
    <property type="project" value="UniProtKB-UniRule"/>
</dbReference>
<dbReference type="GO" id="GO:0071596">
    <property type="term" value="P:ubiquitin-dependent protein catabolic process via the N-end rule pathway"/>
    <property type="evidence" value="ECO:0007669"/>
    <property type="project" value="InterPro"/>
</dbReference>
<dbReference type="HAMAP" id="MF_00689">
    <property type="entry name" value="Bpt"/>
    <property type="match status" value="1"/>
</dbReference>
<dbReference type="InterPro" id="IPR016181">
    <property type="entry name" value="Acyl_CoA_acyltransferase"/>
</dbReference>
<dbReference type="InterPro" id="IPR017138">
    <property type="entry name" value="Asp_Glu_LeuTrfase"/>
</dbReference>
<dbReference type="InterPro" id="IPR030700">
    <property type="entry name" value="N-end_Aminoacyl_Trfase"/>
</dbReference>
<dbReference type="InterPro" id="IPR007472">
    <property type="entry name" value="N-end_Aminoacyl_Trfase_C"/>
</dbReference>
<dbReference type="InterPro" id="IPR007471">
    <property type="entry name" value="N-end_Aminoacyl_Trfase_N"/>
</dbReference>
<dbReference type="NCBIfam" id="NF002341">
    <property type="entry name" value="PRK01305.1-1"/>
    <property type="match status" value="1"/>
</dbReference>
<dbReference type="NCBIfam" id="NF002342">
    <property type="entry name" value="PRK01305.1-3"/>
    <property type="match status" value="1"/>
</dbReference>
<dbReference type="NCBIfam" id="NF002345">
    <property type="entry name" value="PRK01305.2-2"/>
    <property type="match status" value="1"/>
</dbReference>
<dbReference type="NCBIfam" id="NF002346">
    <property type="entry name" value="PRK01305.2-3"/>
    <property type="match status" value="1"/>
</dbReference>
<dbReference type="PANTHER" id="PTHR21367">
    <property type="entry name" value="ARGININE-TRNA-PROTEIN TRANSFERASE 1"/>
    <property type="match status" value="1"/>
</dbReference>
<dbReference type="PANTHER" id="PTHR21367:SF1">
    <property type="entry name" value="ARGINYL-TRNA--PROTEIN TRANSFERASE 1"/>
    <property type="match status" value="1"/>
</dbReference>
<dbReference type="Pfam" id="PF04377">
    <property type="entry name" value="ATE_C"/>
    <property type="match status" value="1"/>
</dbReference>
<dbReference type="Pfam" id="PF04376">
    <property type="entry name" value="ATE_N"/>
    <property type="match status" value="1"/>
</dbReference>
<dbReference type="PIRSF" id="PIRSF037208">
    <property type="entry name" value="ATE_pro_prd"/>
    <property type="match status" value="1"/>
</dbReference>
<dbReference type="SUPFAM" id="SSF55729">
    <property type="entry name" value="Acyl-CoA N-acyltransferases (Nat)"/>
    <property type="match status" value="1"/>
</dbReference>
<protein>
    <recommendedName>
        <fullName evidence="1">Aspartate/glutamate leucyltransferase</fullName>
        <ecNumber evidence="1">2.3.2.29</ecNumber>
    </recommendedName>
</protein>
<sequence length="235" mass="27960">MTELARLKFYATQPHSCSYLPDEQATTLFLDPSQPMDVHVYADLSEMGFRRSGDHLYRPHCQNCNACVPARIPAVRFIPNRQQRRILKRNADLTVSAVRPVFKEEYFDLYRRYIEQRHADGDMYPPSRDQFSTFLVRDLPFCWFYEFRLEGRLMAVAVCDLLPNGLSAVYTFYEPDEERRSLGRYAILWQITEALRQNLDAVYLGYWIKNCKKMNYKTQYRPIELLINQRWVTLN</sequence>
<reference key="1">
    <citation type="journal article" date="2006" name="Nat. Biotechnol.">
        <title>Complete genome sequence of the entomopathogenic and metabolically versatile soil bacterium Pseudomonas entomophila.</title>
        <authorList>
            <person name="Vodovar N."/>
            <person name="Vallenet D."/>
            <person name="Cruveiller S."/>
            <person name="Rouy Z."/>
            <person name="Barbe V."/>
            <person name="Acosta C."/>
            <person name="Cattolico L."/>
            <person name="Jubin C."/>
            <person name="Lajus A."/>
            <person name="Segurens B."/>
            <person name="Vacherie B."/>
            <person name="Wincker P."/>
            <person name="Weissenbach J."/>
            <person name="Lemaitre B."/>
            <person name="Medigue C."/>
            <person name="Boccard F."/>
        </authorList>
    </citation>
    <scope>NUCLEOTIDE SEQUENCE [LARGE SCALE GENOMIC DNA]</scope>
    <source>
        <strain>L48</strain>
    </source>
</reference>
<gene>
    <name evidence="1" type="primary">bpt</name>
    <name type="ordered locus">PSEEN2209</name>
</gene>
<keyword id="KW-0012">Acyltransferase</keyword>
<keyword id="KW-0963">Cytoplasm</keyword>
<keyword id="KW-0808">Transferase</keyword>
<proteinExistence type="inferred from homology"/>
<comment type="function">
    <text evidence="1">Functions in the N-end rule pathway of protein degradation where it conjugates Leu from its aminoacyl-tRNA to the N-termini of proteins containing an N-terminal aspartate or glutamate.</text>
</comment>
<comment type="catalytic activity">
    <reaction evidence="1">
        <text>N-terminal L-glutamyl-[protein] + L-leucyl-tRNA(Leu) = N-terminal L-leucyl-L-glutamyl-[protein] + tRNA(Leu) + H(+)</text>
        <dbReference type="Rhea" id="RHEA:50412"/>
        <dbReference type="Rhea" id="RHEA-COMP:9613"/>
        <dbReference type="Rhea" id="RHEA-COMP:9622"/>
        <dbReference type="Rhea" id="RHEA-COMP:12664"/>
        <dbReference type="Rhea" id="RHEA-COMP:12668"/>
        <dbReference type="ChEBI" id="CHEBI:15378"/>
        <dbReference type="ChEBI" id="CHEBI:64721"/>
        <dbReference type="ChEBI" id="CHEBI:78442"/>
        <dbReference type="ChEBI" id="CHEBI:78494"/>
        <dbReference type="ChEBI" id="CHEBI:133041"/>
        <dbReference type="EC" id="2.3.2.29"/>
    </reaction>
</comment>
<comment type="catalytic activity">
    <reaction evidence="1">
        <text>N-terminal L-aspartyl-[protein] + L-leucyl-tRNA(Leu) = N-terminal L-leucyl-L-aspartyl-[protein] + tRNA(Leu) + H(+)</text>
        <dbReference type="Rhea" id="RHEA:50420"/>
        <dbReference type="Rhea" id="RHEA-COMP:9613"/>
        <dbReference type="Rhea" id="RHEA-COMP:9622"/>
        <dbReference type="Rhea" id="RHEA-COMP:12669"/>
        <dbReference type="Rhea" id="RHEA-COMP:12674"/>
        <dbReference type="ChEBI" id="CHEBI:15378"/>
        <dbReference type="ChEBI" id="CHEBI:64720"/>
        <dbReference type="ChEBI" id="CHEBI:78442"/>
        <dbReference type="ChEBI" id="CHEBI:78494"/>
        <dbReference type="ChEBI" id="CHEBI:133042"/>
        <dbReference type="EC" id="2.3.2.29"/>
    </reaction>
</comment>
<comment type="subcellular location">
    <subcellularLocation>
        <location evidence="1">Cytoplasm</location>
    </subcellularLocation>
</comment>
<comment type="similarity">
    <text evidence="1">Belongs to the R-transferase family. Bpt subfamily.</text>
</comment>
<organism>
    <name type="scientific">Pseudomonas entomophila (strain L48)</name>
    <dbReference type="NCBI Taxonomy" id="384676"/>
    <lineage>
        <taxon>Bacteria</taxon>
        <taxon>Pseudomonadati</taxon>
        <taxon>Pseudomonadota</taxon>
        <taxon>Gammaproteobacteria</taxon>
        <taxon>Pseudomonadales</taxon>
        <taxon>Pseudomonadaceae</taxon>
        <taxon>Pseudomonas</taxon>
    </lineage>
</organism>
<evidence type="ECO:0000255" key="1">
    <source>
        <dbReference type="HAMAP-Rule" id="MF_00689"/>
    </source>
</evidence>
<accession>Q1IBD6</accession>
<name>BPT_PSEE4</name>